<evidence type="ECO:0000255" key="1">
    <source>
        <dbReference type="HAMAP-Rule" id="MF_00054"/>
    </source>
</evidence>
<dbReference type="EMBL" id="BA000045">
    <property type="protein sequence ID" value="BAC91868.1"/>
    <property type="molecule type" value="Genomic_DNA"/>
</dbReference>
<dbReference type="RefSeq" id="NP_926873.1">
    <property type="nucleotide sequence ID" value="NC_005125.1"/>
</dbReference>
<dbReference type="RefSeq" id="WP_011143915.1">
    <property type="nucleotide sequence ID" value="NC_005125.1"/>
</dbReference>
<dbReference type="SMR" id="Q7NEF2"/>
<dbReference type="FunCoup" id="Q7NEF2">
    <property type="interactions" value="360"/>
</dbReference>
<dbReference type="STRING" id="251221.gene:10761444"/>
<dbReference type="EnsemblBacteria" id="BAC91868">
    <property type="protein sequence ID" value="BAC91868"/>
    <property type="gene ID" value="BAC91868"/>
</dbReference>
<dbReference type="KEGG" id="gvi:glr3927"/>
<dbReference type="PATRIC" id="fig|251221.4.peg.3960"/>
<dbReference type="eggNOG" id="COG0480">
    <property type="taxonomic scope" value="Bacteria"/>
</dbReference>
<dbReference type="HOGENOM" id="CLU_002794_4_1_3"/>
<dbReference type="InParanoid" id="Q7NEF2"/>
<dbReference type="OrthoDB" id="580826at2"/>
<dbReference type="PhylomeDB" id="Q7NEF2"/>
<dbReference type="Proteomes" id="UP000000557">
    <property type="component" value="Chromosome"/>
</dbReference>
<dbReference type="GO" id="GO:0005737">
    <property type="term" value="C:cytoplasm"/>
    <property type="evidence" value="ECO:0007669"/>
    <property type="project" value="UniProtKB-SubCell"/>
</dbReference>
<dbReference type="GO" id="GO:0005525">
    <property type="term" value="F:GTP binding"/>
    <property type="evidence" value="ECO:0007669"/>
    <property type="project" value="UniProtKB-UniRule"/>
</dbReference>
<dbReference type="GO" id="GO:0003924">
    <property type="term" value="F:GTPase activity"/>
    <property type="evidence" value="ECO:0007669"/>
    <property type="project" value="InterPro"/>
</dbReference>
<dbReference type="GO" id="GO:0003746">
    <property type="term" value="F:translation elongation factor activity"/>
    <property type="evidence" value="ECO:0007669"/>
    <property type="project" value="UniProtKB-UniRule"/>
</dbReference>
<dbReference type="GO" id="GO:0032790">
    <property type="term" value="P:ribosome disassembly"/>
    <property type="evidence" value="ECO:0000318"/>
    <property type="project" value="GO_Central"/>
</dbReference>
<dbReference type="CDD" id="cd01886">
    <property type="entry name" value="EF-G"/>
    <property type="match status" value="1"/>
</dbReference>
<dbReference type="CDD" id="cd16262">
    <property type="entry name" value="EFG_III"/>
    <property type="match status" value="1"/>
</dbReference>
<dbReference type="CDD" id="cd01434">
    <property type="entry name" value="EFG_mtEFG1_IV"/>
    <property type="match status" value="1"/>
</dbReference>
<dbReference type="CDD" id="cd03713">
    <property type="entry name" value="EFG_mtEFG_C"/>
    <property type="match status" value="1"/>
</dbReference>
<dbReference type="CDD" id="cd04088">
    <property type="entry name" value="EFG_mtEFG_II"/>
    <property type="match status" value="1"/>
</dbReference>
<dbReference type="FunFam" id="2.40.30.10:FF:000006">
    <property type="entry name" value="Elongation factor G"/>
    <property type="match status" value="1"/>
</dbReference>
<dbReference type="FunFam" id="3.30.230.10:FF:000003">
    <property type="entry name" value="Elongation factor G"/>
    <property type="match status" value="1"/>
</dbReference>
<dbReference type="FunFam" id="3.30.70.240:FF:000001">
    <property type="entry name" value="Elongation factor G"/>
    <property type="match status" value="1"/>
</dbReference>
<dbReference type="FunFam" id="3.30.70.870:FF:000001">
    <property type="entry name" value="Elongation factor G"/>
    <property type="match status" value="1"/>
</dbReference>
<dbReference type="FunFam" id="3.40.50.300:FF:000029">
    <property type="entry name" value="Elongation factor G"/>
    <property type="match status" value="1"/>
</dbReference>
<dbReference type="Gene3D" id="3.30.230.10">
    <property type="match status" value="1"/>
</dbReference>
<dbReference type="Gene3D" id="3.30.70.240">
    <property type="match status" value="1"/>
</dbReference>
<dbReference type="Gene3D" id="3.30.70.870">
    <property type="entry name" value="Elongation Factor G (Translational Gtpase), domain 3"/>
    <property type="match status" value="1"/>
</dbReference>
<dbReference type="Gene3D" id="3.40.50.300">
    <property type="entry name" value="P-loop containing nucleotide triphosphate hydrolases"/>
    <property type="match status" value="1"/>
</dbReference>
<dbReference type="Gene3D" id="2.40.30.10">
    <property type="entry name" value="Translation factors"/>
    <property type="match status" value="1"/>
</dbReference>
<dbReference type="HAMAP" id="MF_00054_B">
    <property type="entry name" value="EF_G_EF_2_B"/>
    <property type="match status" value="1"/>
</dbReference>
<dbReference type="InterPro" id="IPR041095">
    <property type="entry name" value="EFG_II"/>
</dbReference>
<dbReference type="InterPro" id="IPR009022">
    <property type="entry name" value="EFG_III"/>
</dbReference>
<dbReference type="InterPro" id="IPR035647">
    <property type="entry name" value="EFG_III/V"/>
</dbReference>
<dbReference type="InterPro" id="IPR047872">
    <property type="entry name" value="EFG_IV"/>
</dbReference>
<dbReference type="InterPro" id="IPR035649">
    <property type="entry name" value="EFG_V"/>
</dbReference>
<dbReference type="InterPro" id="IPR000640">
    <property type="entry name" value="EFG_V-like"/>
</dbReference>
<dbReference type="InterPro" id="IPR004161">
    <property type="entry name" value="EFTu-like_2"/>
</dbReference>
<dbReference type="InterPro" id="IPR031157">
    <property type="entry name" value="G_TR_CS"/>
</dbReference>
<dbReference type="InterPro" id="IPR027417">
    <property type="entry name" value="P-loop_NTPase"/>
</dbReference>
<dbReference type="InterPro" id="IPR020568">
    <property type="entry name" value="Ribosomal_Su5_D2-typ_SF"/>
</dbReference>
<dbReference type="InterPro" id="IPR014721">
    <property type="entry name" value="Ribsml_uS5_D2-typ_fold_subgr"/>
</dbReference>
<dbReference type="InterPro" id="IPR005225">
    <property type="entry name" value="Small_GTP-bd"/>
</dbReference>
<dbReference type="InterPro" id="IPR000795">
    <property type="entry name" value="T_Tr_GTP-bd_dom"/>
</dbReference>
<dbReference type="InterPro" id="IPR009000">
    <property type="entry name" value="Transl_B-barrel_sf"/>
</dbReference>
<dbReference type="InterPro" id="IPR004540">
    <property type="entry name" value="Transl_elong_EFG/EF2"/>
</dbReference>
<dbReference type="InterPro" id="IPR005517">
    <property type="entry name" value="Transl_elong_EFG/EF2_IV"/>
</dbReference>
<dbReference type="NCBIfam" id="TIGR00484">
    <property type="entry name" value="EF-G"/>
    <property type="match status" value="1"/>
</dbReference>
<dbReference type="NCBIfam" id="NF009381">
    <property type="entry name" value="PRK12740.1-5"/>
    <property type="match status" value="1"/>
</dbReference>
<dbReference type="NCBIfam" id="TIGR00231">
    <property type="entry name" value="small_GTP"/>
    <property type="match status" value="1"/>
</dbReference>
<dbReference type="PANTHER" id="PTHR43261:SF1">
    <property type="entry name" value="RIBOSOME-RELEASING FACTOR 2, MITOCHONDRIAL"/>
    <property type="match status" value="1"/>
</dbReference>
<dbReference type="PANTHER" id="PTHR43261">
    <property type="entry name" value="TRANSLATION ELONGATION FACTOR G-RELATED"/>
    <property type="match status" value="1"/>
</dbReference>
<dbReference type="Pfam" id="PF00679">
    <property type="entry name" value="EFG_C"/>
    <property type="match status" value="1"/>
</dbReference>
<dbReference type="Pfam" id="PF14492">
    <property type="entry name" value="EFG_III"/>
    <property type="match status" value="1"/>
</dbReference>
<dbReference type="Pfam" id="PF03764">
    <property type="entry name" value="EFG_IV"/>
    <property type="match status" value="1"/>
</dbReference>
<dbReference type="Pfam" id="PF00009">
    <property type="entry name" value="GTP_EFTU"/>
    <property type="match status" value="1"/>
</dbReference>
<dbReference type="Pfam" id="PF03144">
    <property type="entry name" value="GTP_EFTU_D2"/>
    <property type="match status" value="1"/>
</dbReference>
<dbReference type="PRINTS" id="PR00315">
    <property type="entry name" value="ELONGATNFCT"/>
</dbReference>
<dbReference type="SMART" id="SM00838">
    <property type="entry name" value="EFG_C"/>
    <property type="match status" value="1"/>
</dbReference>
<dbReference type="SMART" id="SM00889">
    <property type="entry name" value="EFG_IV"/>
    <property type="match status" value="1"/>
</dbReference>
<dbReference type="SUPFAM" id="SSF54980">
    <property type="entry name" value="EF-G C-terminal domain-like"/>
    <property type="match status" value="2"/>
</dbReference>
<dbReference type="SUPFAM" id="SSF52540">
    <property type="entry name" value="P-loop containing nucleoside triphosphate hydrolases"/>
    <property type="match status" value="1"/>
</dbReference>
<dbReference type="SUPFAM" id="SSF54211">
    <property type="entry name" value="Ribosomal protein S5 domain 2-like"/>
    <property type="match status" value="1"/>
</dbReference>
<dbReference type="SUPFAM" id="SSF50447">
    <property type="entry name" value="Translation proteins"/>
    <property type="match status" value="1"/>
</dbReference>
<dbReference type="PROSITE" id="PS00301">
    <property type="entry name" value="G_TR_1"/>
    <property type="match status" value="1"/>
</dbReference>
<dbReference type="PROSITE" id="PS51722">
    <property type="entry name" value="G_TR_2"/>
    <property type="match status" value="1"/>
</dbReference>
<comment type="function">
    <text evidence="1">Catalyzes the GTP-dependent ribosomal translocation step during translation elongation. During this step, the ribosome changes from the pre-translocational (PRE) to the post-translocational (POST) state as the newly formed A-site-bound peptidyl-tRNA and P-site-bound deacylated tRNA move to the P and E sites, respectively. Catalyzes the coordinated movement of the two tRNA molecules, the mRNA and conformational changes in the ribosome.</text>
</comment>
<comment type="subcellular location">
    <subcellularLocation>
        <location evidence="1">Cytoplasm</location>
    </subcellularLocation>
</comment>
<comment type="similarity">
    <text evidence="1">Belongs to the TRAFAC class translation factor GTPase superfamily. Classic translation factor GTPase family. EF-G/EF-2 subfamily.</text>
</comment>
<name>EFG_GLOVI</name>
<accession>Q7NEF2</accession>
<sequence>MARNIPLERVRNIGIAAHIDAGKTTTTERILFYSGVIHKIGEVHEGNTVTDWMAQERERGITITAAAITTAWTRRDPENPTQPLPGALEHKINIIDTPGHVDFTIEVERSMRVLDGVITVLCSVGGVQPQTETVWRQANRYNVPRFIFVNKMDRTGANFYKVYSQVRDRLRANAVPIQLPIGAEDTLSGIVDLVGMKAYVYGNDIGTDIRVEEIPADMEELVQEYRAKLIEAVSETDDVLLEKYFGGEELTEAEIKAALRKGTVANTIVPMLCGSAFKNKGVQQMLDAVLDYLPSPLDIPPIKGLLPNGTEVERSADDSQPLSALAFKIMADPYGRLTFVRVYSGILQKGSYALNASKDKKERISRLIVLKADDRIEVDELRAGDLGAVVGLKDTFTGDTLCTEDSPVILESLFIPEPVISVAIEPKTKADLDKLSKALQSLSEEDPTFRVHVDQETNQTIIAGMGELHLEILVDRMLREFKVEANVGAPQVAYRETIRKAVNNVEGLYKRQTGGKGQYGHVVINLEPGEPGTGFEFVSKIVGGVVPKEYIGPAEQGMKERCESGVIAGYPLIDVKVTMVDGSYHDVDSSEMAFKIAGSLALREAAQKAQPVLLEPMMKVEVEVSGDFLGDVMGDLNARRGQIESMDNEGGVSKVTSRVPLAEMFGYATDIRSKTQGRGTFSMEFSHYEEVPRNVAETIIAKNKGNA</sequence>
<protein>
    <recommendedName>
        <fullName evidence="1">Elongation factor G</fullName>
        <shortName evidence="1">EF-G</shortName>
    </recommendedName>
</protein>
<keyword id="KW-0963">Cytoplasm</keyword>
<keyword id="KW-0251">Elongation factor</keyword>
<keyword id="KW-0342">GTP-binding</keyword>
<keyword id="KW-0547">Nucleotide-binding</keyword>
<keyword id="KW-0648">Protein biosynthesis</keyword>
<keyword id="KW-1185">Reference proteome</keyword>
<gene>
    <name evidence="1" type="primary">fusA</name>
    <name type="ordered locus">glr3927</name>
</gene>
<organism>
    <name type="scientific">Gloeobacter violaceus (strain ATCC 29082 / PCC 7421)</name>
    <dbReference type="NCBI Taxonomy" id="251221"/>
    <lineage>
        <taxon>Bacteria</taxon>
        <taxon>Bacillati</taxon>
        <taxon>Cyanobacteriota</taxon>
        <taxon>Cyanophyceae</taxon>
        <taxon>Gloeobacterales</taxon>
        <taxon>Gloeobacteraceae</taxon>
        <taxon>Gloeobacter</taxon>
    </lineage>
</organism>
<reference key="1">
    <citation type="journal article" date="2003" name="DNA Res.">
        <title>Complete genome structure of Gloeobacter violaceus PCC 7421, a cyanobacterium that lacks thylakoids.</title>
        <authorList>
            <person name="Nakamura Y."/>
            <person name="Kaneko T."/>
            <person name="Sato S."/>
            <person name="Mimuro M."/>
            <person name="Miyashita H."/>
            <person name="Tsuchiya T."/>
            <person name="Sasamoto S."/>
            <person name="Watanabe A."/>
            <person name="Kawashima K."/>
            <person name="Kishida Y."/>
            <person name="Kiyokawa C."/>
            <person name="Kohara M."/>
            <person name="Matsumoto M."/>
            <person name="Matsuno A."/>
            <person name="Nakazaki N."/>
            <person name="Shimpo S."/>
            <person name="Takeuchi C."/>
            <person name="Yamada M."/>
            <person name="Tabata S."/>
        </authorList>
    </citation>
    <scope>NUCLEOTIDE SEQUENCE [LARGE SCALE GENOMIC DNA]</scope>
    <source>
        <strain>ATCC 29082 / PCC 7421</strain>
    </source>
</reference>
<feature type="chain" id="PRO_0000091129" description="Elongation factor G">
    <location>
        <begin position="1"/>
        <end position="707"/>
    </location>
</feature>
<feature type="domain" description="tr-type G">
    <location>
        <begin position="8"/>
        <end position="297"/>
    </location>
</feature>
<feature type="binding site" evidence="1">
    <location>
        <begin position="17"/>
        <end position="24"/>
    </location>
    <ligand>
        <name>GTP</name>
        <dbReference type="ChEBI" id="CHEBI:37565"/>
    </ligand>
</feature>
<feature type="binding site" evidence="1">
    <location>
        <begin position="96"/>
        <end position="100"/>
    </location>
    <ligand>
        <name>GTP</name>
        <dbReference type="ChEBI" id="CHEBI:37565"/>
    </ligand>
</feature>
<feature type="binding site" evidence="1">
    <location>
        <begin position="150"/>
        <end position="153"/>
    </location>
    <ligand>
        <name>GTP</name>
        <dbReference type="ChEBI" id="CHEBI:37565"/>
    </ligand>
</feature>
<proteinExistence type="inferred from homology"/>